<accession>B0RPY2</accession>
<organism>
    <name type="scientific">Xanthomonas campestris pv. campestris (strain B100)</name>
    <dbReference type="NCBI Taxonomy" id="509169"/>
    <lineage>
        <taxon>Bacteria</taxon>
        <taxon>Pseudomonadati</taxon>
        <taxon>Pseudomonadota</taxon>
        <taxon>Gammaproteobacteria</taxon>
        <taxon>Lysobacterales</taxon>
        <taxon>Lysobacteraceae</taxon>
        <taxon>Xanthomonas</taxon>
    </lineage>
</organism>
<sequence length="242" mass="25573">MGRGPSIEGRKNASDAKRGKIFTKIIREISVAARAGGGDPSNNPRLRTAMDKGLSSNMSKDVIERAIKKATGELEGVEYEEVRYEGYAPGGVAVIVDCLTDNRVRAVADVRHAFSKCGGNMGTDGSVAFMFKRLGVLSFAAGADEDAVTEAAIEAGADDVVVYPEDGAIDVLTAPDTFAQVKQALATAGFEPAHAEITFRAENDIAVDGDTAVQVRKLLDMLEDLDDVQDVYSNVDQASLGA</sequence>
<name>Y1169_XANCB</name>
<comment type="subcellular location">
    <subcellularLocation>
        <location evidence="1">Cytoplasm</location>
    </subcellularLocation>
</comment>
<comment type="similarity">
    <text evidence="1">Belongs to the TACO1 family.</text>
</comment>
<dbReference type="EMBL" id="AM920689">
    <property type="protein sequence ID" value="CAP50517.1"/>
    <property type="molecule type" value="Genomic_DNA"/>
</dbReference>
<dbReference type="SMR" id="B0RPY2"/>
<dbReference type="KEGG" id="xca:xcc-b100_1169"/>
<dbReference type="HOGENOM" id="CLU_062974_2_2_6"/>
<dbReference type="Proteomes" id="UP000001188">
    <property type="component" value="Chromosome"/>
</dbReference>
<dbReference type="GO" id="GO:0005829">
    <property type="term" value="C:cytosol"/>
    <property type="evidence" value="ECO:0007669"/>
    <property type="project" value="TreeGrafter"/>
</dbReference>
<dbReference type="GO" id="GO:0003677">
    <property type="term" value="F:DNA binding"/>
    <property type="evidence" value="ECO:0007669"/>
    <property type="project" value="UniProtKB-UniRule"/>
</dbReference>
<dbReference type="GO" id="GO:0006355">
    <property type="term" value="P:regulation of DNA-templated transcription"/>
    <property type="evidence" value="ECO:0007669"/>
    <property type="project" value="UniProtKB-UniRule"/>
</dbReference>
<dbReference type="FunFam" id="1.10.10.200:FF:000007">
    <property type="entry name" value="Probable transcriptional regulatory protein AC801_15750"/>
    <property type="match status" value="1"/>
</dbReference>
<dbReference type="FunFam" id="3.30.70.980:FF:000002">
    <property type="entry name" value="Probable transcriptional regulatory protein YebC"/>
    <property type="match status" value="1"/>
</dbReference>
<dbReference type="Gene3D" id="1.10.10.200">
    <property type="match status" value="1"/>
</dbReference>
<dbReference type="Gene3D" id="3.30.70.980">
    <property type="match status" value="2"/>
</dbReference>
<dbReference type="HAMAP" id="MF_00693">
    <property type="entry name" value="Transcrip_reg_TACO1"/>
    <property type="match status" value="1"/>
</dbReference>
<dbReference type="InterPro" id="IPR017856">
    <property type="entry name" value="Integrase-like_N"/>
</dbReference>
<dbReference type="InterPro" id="IPR048300">
    <property type="entry name" value="TACO1_YebC-like_2nd/3rd_dom"/>
</dbReference>
<dbReference type="InterPro" id="IPR049083">
    <property type="entry name" value="TACO1_YebC_N"/>
</dbReference>
<dbReference type="InterPro" id="IPR002876">
    <property type="entry name" value="Transcrip_reg_TACO1-like"/>
</dbReference>
<dbReference type="InterPro" id="IPR026564">
    <property type="entry name" value="Transcrip_reg_TACO1-like_dom3"/>
</dbReference>
<dbReference type="InterPro" id="IPR029072">
    <property type="entry name" value="YebC-like"/>
</dbReference>
<dbReference type="NCBIfam" id="NF001030">
    <property type="entry name" value="PRK00110.1"/>
    <property type="match status" value="1"/>
</dbReference>
<dbReference type="NCBIfam" id="NF009044">
    <property type="entry name" value="PRK12378.1"/>
    <property type="match status" value="1"/>
</dbReference>
<dbReference type="NCBIfam" id="TIGR01033">
    <property type="entry name" value="YebC/PmpR family DNA-binding transcriptional regulator"/>
    <property type="match status" value="1"/>
</dbReference>
<dbReference type="PANTHER" id="PTHR12532:SF6">
    <property type="entry name" value="TRANSCRIPTIONAL REGULATORY PROTEIN YEBC-RELATED"/>
    <property type="match status" value="1"/>
</dbReference>
<dbReference type="PANTHER" id="PTHR12532">
    <property type="entry name" value="TRANSLATIONAL ACTIVATOR OF CYTOCHROME C OXIDASE 1"/>
    <property type="match status" value="1"/>
</dbReference>
<dbReference type="Pfam" id="PF20772">
    <property type="entry name" value="TACO1_YebC_N"/>
    <property type="match status" value="1"/>
</dbReference>
<dbReference type="Pfam" id="PF01709">
    <property type="entry name" value="Transcrip_reg"/>
    <property type="match status" value="1"/>
</dbReference>
<dbReference type="SUPFAM" id="SSF75625">
    <property type="entry name" value="YebC-like"/>
    <property type="match status" value="1"/>
</dbReference>
<evidence type="ECO:0000255" key="1">
    <source>
        <dbReference type="HAMAP-Rule" id="MF_00693"/>
    </source>
</evidence>
<protein>
    <recommendedName>
        <fullName evidence="1">Probable transcriptional regulatory protein xcc-b100_1169</fullName>
    </recommendedName>
</protein>
<reference key="1">
    <citation type="journal article" date="2008" name="J. Biotechnol.">
        <title>The genome of Xanthomonas campestris pv. campestris B100 and its use for the reconstruction of metabolic pathways involved in xanthan biosynthesis.</title>
        <authorList>
            <person name="Vorhoelter F.-J."/>
            <person name="Schneiker S."/>
            <person name="Goesmann A."/>
            <person name="Krause L."/>
            <person name="Bekel T."/>
            <person name="Kaiser O."/>
            <person name="Linke B."/>
            <person name="Patschkowski T."/>
            <person name="Rueckert C."/>
            <person name="Schmid J."/>
            <person name="Sidhu V.K."/>
            <person name="Sieber V."/>
            <person name="Tauch A."/>
            <person name="Watt S.A."/>
            <person name="Weisshaar B."/>
            <person name="Becker A."/>
            <person name="Niehaus K."/>
            <person name="Puehler A."/>
        </authorList>
    </citation>
    <scope>NUCLEOTIDE SEQUENCE [LARGE SCALE GENOMIC DNA]</scope>
    <source>
        <strain>B100</strain>
    </source>
</reference>
<feature type="chain" id="PRO_1000132256" description="Probable transcriptional regulatory protein xcc-b100_1169">
    <location>
        <begin position="1"/>
        <end position="242"/>
    </location>
</feature>
<gene>
    <name type="ordered locus">xcc-b100_1169</name>
</gene>
<proteinExistence type="inferred from homology"/>
<keyword id="KW-0963">Cytoplasm</keyword>
<keyword id="KW-0238">DNA-binding</keyword>
<keyword id="KW-0804">Transcription</keyword>
<keyword id="KW-0805">Transcription regulation</keyword>